<protein>
    <recommendedName>
        <fullName>Crustacyanin-C1 subunit</fullName>
    </recommendedName>
</protein>
<dbReference type="PIR" id="S19534">
    <property type="entry name" value="S19534"/>
</dbReference>
<dbReference type="PDB" id="1H91">
    <property type="method" value="X-ray"/>
    <property type="resolution" value="1.40 A"/>
    <property type="chains" value="A/B=2-180"/>
</dbReference>
<dbReference type="PDB" id="1I4U">
    <property type="method" value="X-ray"/>
    <property type="resolution" value="1.15 A"/>
    <property type="chains" value="A/B=1-181"/>
</dbReference>
<dbReference type="PDB" id="1OBQ">
    <property type="method" value="X-ray"/>
    <property type="resolution" value="1.85 A"/>
    <property type="chains" value="A/B=1-181"/>
</dbReference>
<dbReference type="PDB" id="1OBU">
    <property type="method" value="X-ray"/>
    <property type="resolution" value="2.00 A"/>
    <property type="chains" value="A/B=1-181"/>
</dbReference>
<dbReference type="PDB" id="1S2P">
    <property type="method" value="X-ray"/>
    <property type="resolution" value="1.30 A"/>
    <property type="chains" value="A/B=1-181"/>
</dbReference>
<dbReference type="PDB" id="4ALO">
    <property type="method" value="X-ray"/>
    <property type="resolution" value="2.37 A"/>
    <property type="chains" value="A/B=1-180"/>
</dbReference>
<dbReference type="PDBsum" id="1H91"/>
<dbReference type="PDBsum" id="1I4U"/>
<dbReference type="PDBsum" id="1OBQ"/>
<dbReference type="PDBsum" id="1OBU"/>
<dbReference type="PDBsum" id="1S2P"/>
<dbReference type="PDBsum" id="4ALO"/>
<dbReference type="SMR" id="P80029"/>
<dbReference type="EvolutionaryTrace" id="P80029"/>
<dbReference type="GO" id="GO:0005737">
    <property type="term" value="C:cytoplasm"/>
    <property type="evidence" value="ECO:0007669"/>
    <property type="project" value="TreeGrafter"/>
</dbReference>
<dbReference type="GO" id="GO:0005576">
    <property type="term" value="C:extracellular region"/>
    <property type="evidence" value="ECO:0007669"/>
    <property type="project" value="UniProtKB-SubCell"/>
</dbReference>
<dbReference type="GO" id="GO:0031409">
    <property type="term" value="F:pigment binding"/>
    <property type="evidence" value="ECO:0007669"/>
    <property type="project" value="UniProtKB-KW"/>
</dbReference>
<dbReference type="GO" id="GO:0006629">
    <property type="term" value="P:lipid metabolic process"/>
    <property type="evidence" value="ECO:0007669"/>
    <property type="project" value="TreeGrafter"/>
</dbReference>
<dbReference type="GO" id="GO:0000302">
    <property type="term" value="P:response to reactive oxygen species"/>
    <property type="evidence" value="ECO:0007669"/>
    <property type="project" value="TreeGrafter"/>
</dbReference>
<dbReference type="CDD" id="cd19436">
    <property type="entry name" value="lipocalin_crustacyanin"/>
    <property type="match status" value="1"/>
</dbReference>
<dbReference type="Gene3D" id="2.40.128.20">
    <property type="match status" value="1"/>
</dbReference>
<dbReference type="InterPro" id="IPR012674">
    <property type="entry name" value="Calycin"/>
</dbReference>
<dbReference type="InterPro" id="IPR003057">
    <property type="entry name" value="Invtbrt_color"/>
</dbReference>
<dbReference type="InterPro" id="IPR022271">
    <property type="entry name" value="Lipocalin_ApoD"/>
</dbReference>
<dbReference type="InterPro" id="IPR000566">
    <property type="entry name" value="Lipocln_cytosolic_FA-bd_dom"/>
</dbReference>
<dbReference type="PANTHER" id="PTHR10612">
    <property type="entry name" value="APOLIPOPROTEIN D"/>
    <property type="match status" value="1"/>
</dbReference>
<dbReference type="PANTHER" id="PTHR10612:SF34">
    <property type="entry name" value="APOLIPOPROTEIN D"/>
    <property type="match status" value="1"/>
</dbReference>
<dbReference type="Pfam" id="PF00061">
    <property type="entry name" value="Lipocalin"/>
    <property type="match status" value="1"/>
</dbReference>
<dbReference type="PIRSF" id="PIRSF036893">
    <property type="entry name" value="Lipocalin_ApoD"/>
    <property type="match status" value="1"/>
</dbReference>
<dbReference type="PRINTS" id="PR01273">
    <property type="entry name" value="INVTBRTCOLOR"/>
</dbReference>
<dbReference type="PRINTS" id="PR00179">
    <property type="entry name" value="LIPOCALIN"/>
</dbReference>
<dbReference type="SUPFAM" id="SSF50814">
    <property type="entry name" value="Lipocalins"/>
    <property type="match status" value="1"/>
</dbReference>
<name>CRC1_HOMGA</name>
<reference key="1">
    <citation type="journal article" date="1991" name="Eur. J. Biochem.">
        <title>Complete sequence and model for the C1 subunit of the carotenoprotein, crustacyanin, and model for the dimer, beta-crustacyanin, formed from the C1 and A2 subunits with astaxanthin.</title>
        <authorList>
            <person name="Keen J.N."/>
            <person name="Caceres I."/>
            <person name="Eliopoulos E.E."/>
            <person name="Zagalsky P.F."/>
            <person name="Findlay J.B.C."/>
        </authorList>
    </citation>
    <scope>PROTEIN SEQUENCE</scope>
</reference>
<reference key="2">
    <citation type="journal article" date="2001" name="Acta Crystallogr. D">
        <title>The C1 subunit of alpha-crustacyanin: the de novo phasing of the crystal structure of a 40 kDa homodimeric protein using the anomalous scattering from S atoms combined with direct methods.</title>
        <authorList>
            <person name="Gordon E.J."/>
            <person name="Leonard G.A."/>
            <person name="McSweeney S."/>
            <person name="Zagalsky P.F."/>
        </authorList>
    </citation>
    <scope>X-RAY CRYSTALLOGRAPHY (1.15 ANGSTROMS) OF HOMODIMER</scope>
</reference>
<feature type="chain" id="PRO_0000201011" description="Crustacyanin-C1 subunit">
    <location>
        <begin position="1"/>
        <end position="181"/>
    </location>
</feature>
<feature type="disulfide bond">
    <location>
        <begin position="12"/>
        <end position="121"/>
    </location>
</feature>
<feature type="disulfide bond">
    <location>
        <begin position="51"/>
        <end position="173"/>
    </location>
</feature>
<feature type="disulfide bond">
    <location>
        <begin position="117"/>
        <end position="150"/>
    </location>
</feature>
<feature type="strand" evidence="2">
    <location>
        <begin position="7"/>
        <end position="10"/>
    </location>
</feature>
<feature type="helix" evidence="2">
    <location>
        <begin position="17"/>
        <end position="24"/>
    </location>
</feature>
<feature type="helix" evidence="2">
    <location>
        <begin position="25"/>
        <end position="27"/>
    </location>
</feature>
<feature type="helix" evidence="2">
    <location>
        <begin position="28"/>
        <end position="31"/>
    </location>
</feature>
<feature type="strand" evidence="2">
    <location>
        <begin position="33"/>
        <end position="41"/>
    </location>
</feature>
<feature type="strand" evidence="2">
    <location>
        <begin position="48"/>
        <end position="58"/>
    </location>
</feature>
<feature type="strand" evidence="2">
    <location>
        <begin position="63"/>
        <end position="71"/>
    </location>
</feature>
<feature type="strand" evidence="2">
    <location>
        <begin position="76"/>
        <end position="85"/>
    </location>
</feature>
<feature type="strand" evidence="2">
    <location>
        <begin position="91"/>
        <end position="97"/>
    </location>
</feature>
<feature type="strand" evidence="2">
    <location>
        <begin position="102"/>
        <end position="110"/>
    </location>
</feature>
<feature type="strand" evidence="2">
    <location>
        <begin position="112"/>
        <end position="123"/>
    </location>
</feature>
<feature type="strand" evidence="2">
    <location>
        <begin position="127"/>
        <end position="141"/>
    </location>
</feature>
<feature type="helix" evidence="2">
    <location>
        <begin position="144"/>
        <end position="156"/>
    </location>
</feature>
<feature type="helix" evidence="2">
    <location>
        <begin position="161"/>
        <end position="163"/>
    </location>
</feature>
<feature type="strand" evidence="2">
    <location>
        <begin position="164"/>
        <end position="166"/>
    </location>
</feature>
<feature type="helix" evidence="2">
    <location>
        <begin position="175"/>
        <end position="178"/>
    </location>
</feature>
<evidence type="ECO:0000305" key="1"/>
<evidence type="ECO:0007829" key="2">
    <source>
        <dbReference type="PDB" id="1I4U"/>
    </source>
</evidence>
<sequence length="181" mass="20667">DKIPDFVVPGKCASVDRNKLWAEQTPNRNSYAGVWYQFALTNNPYQLIEKCVRNEYSFDGKQFVIKSTGIAYDGNLLKRNGKLYPNPFGEPHLSIDYENSFAAPLVILETDYSNYACLYSCIDYNFGYHSDFSFIFSRSANLADQYVKKCEAAFKNINVDTTRFVKTVQGSSCPYDTQKTL</sequence>
<keyword id="KW-0002">3D-structure</keyword>
<keyword id="KW-0903">Direct protein sequencing</keyword>
<keyword id="KW-1015">Disulfide bond</keyword>
<keyword id="KW-0608">Pigment</keyword>
<keyword id="KW-0964">Secreted</keyword>
<keyword id="KW-0813">Transport</keyword>
<organism>
    <name type="scientific">Homarus gammarus</name>
    <name type="common">European lobster</name>
    <name type="synonym">Homarus vulgaris</name>
    <dbReference type="NCBI Taxonomy" id="6707"/>
    <lineage>
        <taxon>Eukaryota</taxon>
        <taxon>Metazoa</taxon>
        <taxon>Ecdysozoa</taxon>
        <taxon>Arthropoda</taxon>
        <taxon>Crustacea</taxon>
        <taxon>Multicrustacea</taxon>
        <taxon>Malacostraca</taxon>
        <taxon>Eumalacostraca</taxon>
        <taxon>Eucarida</taxon>
        <taxon>Decapoda</taxon>
        <taxon>Pleocyemata</taxon>
        <taxon>Astacidea</taxon>
        <taxon>Nephropoidea</taxon>
        <taxon>Nephropidae</taxon>
        <taxon>Homarus</taxon>
    </lineage>
</organism>
<comment type="function">
    <text>Binds the carotenoid astaxanthin (AXT) which provides the blue coloration to the carapace of the lobster.</text>
</comment>
<comment type="subunit">
    <text>Oligomer; Can form dimers (beta-crustacyanin); or complexes of 16 subunits (alpha-crustacyanin). There are five types of subunits: A1, A2, A3, C1 and C2.</text>
</comment>
<comment type="subcellular location">
    <subcellularLocation>
        <location>Secreted</location>
        <location>Extracellular space</location>
    </subcellularLocation>
</comment>
<comment type="tissue specificity">
    <text>Found in the carapace.</text>
</comment>
<comment type="similarity">
    <text evidence="1">Belongs to the calycin superfamily. Lipocalin family.</text>
</comment>
<comment type="online information" name="Protein Spotlight">
    <link uri="https://www.proteinspotlight.org/back_issues/026"/>
    <text>Squeeze me - Issue 26 of September 2002</text>
</comment>
<accession>P80029</accession>
<proteinExistence type="evidence at protein level"/>